<proteinExistence type="evidence at transcript level"/>
<comment type="subcellular location">
    <subcellularLocation>
        <location evidence="1">Cytoplasm</location>
    </subcellularLocation>
</comment>
<comment type="similarity">
    <text evidence="2">Belongs to the GSKIP family.</text>
</comment>
<protein>
    <recommendedName>
        <fullName>GSK3-beta interaction protein</fullName>
        <shortName>GSKIP</shortName>
    </recommendedName>
</protein>
<dbReference type="EMBL" id="BC050237">
    <property type="protein sequence ID" value="AAH50237.1"/>
    <property type="molecule type" value="mRNA"/>
</dbReference>
<dbReference type="RefSeq" id="NP_998600.1">
    <property type="nucleotide sequence ID" value="NM_213435.1"/>
</dbReference>
<dbReference type="SMR" id="Q7ZWI4"/>
<dbReference type="FunCoup" id="Q7ZWI4">
    <property type="interactions" value="819"/>
</dbReference>
<dbReference type="STRING" id="7955.ENSDARP00000055540"/>
<dbReference type="PaxDb" id="7955-ENSDARP00000055540"/>
<dbReference type="GeneID" id="406744"/>
<dbReference type="KEGG" id="dre:406744"/>
<dbReference type="AGR" id="ZFIN:ZDB-GENE-040426-2777"/>
<dbReference type="CTD" id="51527"/>
<dbReference type="ZFIN" id="ZDB-GENE-040426-2777">
    <property type="gene designation" value="gskip"/>
</dbReference>
<dbReference type="eggNOG" id="KOG3965">
    <property type="taxonomic scope" value="Eukaryota"/>
</dbReference>
<dbReference type="InParanoid" id="Q7ZWI4"/>
<dbReference type="OrthoDB" id="5804279at2759"/>
<dbReference type="PhylomeDB" id="Q7ZWI4"/>
<dbReference type="PRO" id="PR:Q7ZWI4"/>
<dbReference type="Proteomes" id="UP000000437">
    <property type="component" value="Chromosome 17"/>
</dbReference>
<dbReference type="GO" id="GO:0005737">
    <property type="term" value="C:cytoplasm"/>
    <property type="evidence" value="ECO:0000318"/>
    <property type="project" value="GO_Central"/>
</dbReference>
<dbReference type="GO" id="GO:0019207">
    <property type="term" value="F:kinase regulator activity"/>
    <property type="evidence" value="ECO:0000318"/>
    <property type="project" value="GO_Central"/>
</dbReference>
<dbReference type="GO" id="GO:0051018">
    <property type="term" value="F:protein kinase A binding"/>
    <property type="evidence" value="ECO:0000318"/>
    <property type="project" value="GO_Central"/>
</dbReference>
<dbReference type="GO" id="GO:0060828">
    <property type="term" value="P:regulation of canonical Wnt signaling pathway"/>
    <property type="evidence" value="ECO:0007669"/>
    <property type="project" value="InterPro"/>
</dbReference>
<dbReference type="GO" id="GO:0030111">
    <property type="term" value="P:regulation of Wnt signaling pathway"/>
    <property type="evidence" value="ECO:0000318"/>
    <property type="project" value="GO_Central"/>
</dbReference>
<dbReference type="Gene3D" id="3.30.2280.10">
    <property type="entry name" value="Hypothetical protein (hspc210)"/>
    <property type="match status" value="1"/>
</dbReference>
<dbReference type="InterPro" id="IPR037395">
    <property type="entry name" value="GSKIP"/>
</dbReference>
<dbReference type="InterPro" id="IPR007967">
    <property type="entry name" value="GSKIP_dom"/>
</dbReference>
<dbReference type="InterPro" id="IPR023231">
    <property type="entry name" value="GSKIP_dom_sf"/>
</dbReference>
<dbReference type="PANTHER" id="PTHR12490">
    <property type="entry name" value="GSK3B-INTERACTING PROTEIN"/>
    <property type="match status" value="1"/>
</dbReference>
<dbReference type="PANTHER" id="PTHR12490:SF4">
    <property type="entry name" value="GSK3B-INTERACTING PROTEIN"/>
    <property type="match status" value="1"/>
</dbReference>
<dbReference type="Pfam" id="PF05303">
    <property type="entry name" value="GSKIP_dom"/>
    <property type="match status" value="1"/>
</dbReference>
<dbReference type="SUPFAM" id="SSF103107">
    <property type="entry name" value="Hypothetical protein c14orf129, hspc210"/>
    <property type="match status" value="1"/>
</dbReference>
<organism>
    <name type="scientific">Danio rerio</name>
    <name type="common">Zebrafish</name>
    <name type="synonym">Brachydanio rerio</name>
    <dbReference type="NCBI Taxonomy" id="7955"/>
    <lineage>
        <taxon>Eukaryota</taxon>
        <taxon>Metazoa</taxon>
        <taxon>Chordata</taxon>
        <taxon>Craniata</taxon>
        <taxon>Vertebrata</taxon>
        <taxon>Euteleostomi</taxon>
        <taxon>Actinopterygii</taxon>
        <taxon>Neopterygii</taxon>
        <taxon>Teleostei</taxon>
        <taxon>Ostariophysi</taxon>
        <taxon>Cypriniformes</taxon>
        <taxon>Danionidae</taxon>
        <taxon>Danioninae</taxon>
        <taxon>Danio</taxon>
    </lineage>
</organism>
<sequence length="133" mass="14918">MEVDCKPEDLSKCSYDERCVELGEVKDMRLEAEAVVNDVLFAVSDMHVSHNLSSGLDVAYINVETREGNRYCLELTEAGLKVVGHTFDKVNDGLSSQYHETVYSLLDSLSPGYREAFGNALLQRLERLKQNGQ</sequence>
<reference key="1">
    <citation type="submission" date="2003-04" db="EMBL/GenBank/DDBJ databases">
        <authorList>
            <consortium name="NIH - Zebrafish Gene Collection (ZGC) project"/>
        </authorList>
    </citation>
    <scope>NUCLEOTIDE SEQUENCE [LARGE SCALE MRNA]</scope>
    <source>
        <strain>AB</strain>
    </source>
</reference>
<keyword id="KW-0963">Cytoplasm</keyword>
<keyword id="KW-1185">Reference proteome</keyword>
<accession>Q7ZWI4</accession>
<feature type="chain" id="PRO_0000220953" description="GSK3-beta interaction protein">
    <location>
        <begin position="1"/>
        <end position="133"/>
    </location>
</feature>
<name>GSKIP_DANRE</name>
<gene>
    <name type="primary">gskip</name>
    <name type="ORF">zgc:55683</name>
</gene>
<evidence type="ECO:0000250" key="1"/>
<evidence type="ECO:0000305" key="2"/>